<protein>
    <recommendedName>
        <fullName evidence="1">DNA polymerase IV</fullName>
        <shortName evidence="1">Pol IV</shortName>
        <ecNumber evidence="1">2.7.7.7</ecNumber>
    </recommendedName>
</protein>
<accession>Q3ABL2</accession>
<proteinExistence type="inferred from homology"/>
<comment type="function">
    <text evidence="1">Poorly processive, error-prone DNA polymerase involved in untargeted mutagenesis. Copies undamaged DNA at stalled replication forks, which arise in vivo from mismatched or misaligned primer ends. These misaligned primers can be extended by PolIV. Exhibits no 3'-5' exonuclease (proofreading) activity. May be involved in translesional synthesis, in conjunction with the beta clamp from PolIII.</text>
</comment>
<comment type="catalytic activity">
    <reaction evidence="1">
        <text>DNA(n) + a 2'-deoxyribonucleoside 5'-triphosphate = DNA(n+1) + diphosphate</text>
        <dbReference type="Rhea" id="RHEA:22508"/>
        <dbReference type="Rhea" id="RHEA-COMP:17339"/>
        <dbReference type="Rhea" id="RHEA-COMP:17340"/>
        <dbReference type="ChEBI" id="CHEBI:33019"/>
        <dbReference type="ChEBI" id="CHEBI:61560"/>
        <dbReference type="ChEBI" id="CHEBI:173112"/>
        <dbReference type="EC" id="2.7.7.7"/>
    </reaction>
</comment>
<comment type="cofactor">
    <cofactor evidence="1">
        <name>Mg(2+)</name>
        <dbReference type="ChEBI" id="CHEBI:18420"/>
    </cofactor>
    <text evidence="1">Binds 2 magnesium ions per subunit.</text>
</comment>
<comment type="subunit">
    <text evidence="1">Monomer.</text>
</comment>
<comment type="subcellular location">
    <subcellularLocation>
        <location evidence="1">Cytoplasm</location>
    </subcellularLocation>
</comment>
<comment type="similarity">
    <text evidence="1">Belongs to the DNA polymerase type-Y family.</text>
</comment>
<name>DPO4_CARHZ</name>
<evidence type="ECO:0000255" key="1">
    <source>
        <dbReference type="HAMAP-Rule" id="MF_01113"/>
    </source>
</evidence>
<keyword id="KW-0963">Cytoplasm</keyword>
<keyword id="KW-0227">DNA damage</keyword>
<keyword id="KW-0234">DNA repair</keyword>
<keyword id="KW-0235">DNA replication</keyword>
<keyword id="KW-0238">DNA-binding</keyword>
<keyword id="KW-0239">DNA-directed DNA polymerase</keyword>
<keyword id="KW-0460">Magnesium</keyword>
<keyword id="KW-0479">Metal-binding</keyword>
<keyword id="KW-0515">Mutator protein</keyword>
<keyword id="KW-0548">Nucleotidyltransferase</keyword>
<keyword id="KW-1185">Reference proteome</keyword>
<keyword id="KW-0808">Transferase</keyword>
<gene>
    <name evidence="1" type="primary">dinB</name>
    <name type="ordered locus">CHY_1651</name>
</gene>
<dbReference type="EC" id="2.7.7.7" evidence="1"/>
<dbReference type="EMBL" id="CP000141">
    <property type="protein sequence ID" value="ABB14717.1"/>
    <property type="molecule type" value="Genomic_DNA"/>
</dbReference>
<dbReference type="RefSeq" id="WP_011344547.1">
    <property type="nucleotide sequence ID" value="NC_007503.1"/>
</dbReference>
<dbReference type="SMR" id="Q3ABL2"/>
<dbReference type="FunCoup" id="Q3ABL2">
    <property type="interactions" value="377"/>
</dbReference>
<dbReference type="STRING" id="246194.CHY_1651"/>
<dbReference type="KEGG" id="chy:CHY_1651"/>
<dbReference type="eggNOG" id="COG0389">
    <property type="taxonomic scope" value="Bacteria"/>
</dbReference>
<dbReference type="HOGENOM" id="CLU_012348_1_2_9"/>
<dbReference type="InParanoid" id="Q3ABL2"/>
<dbReference type="OrthoDB" id="9808813at2"/>
<dbReference type="Proteomes" id="UP000002706">
    <property type="component" value="Chromosome"/>
</dbReference>
<dbReference type="GO" id="GO:0005829">
    <property type="term" value="C:cytosol"/>
    <property type="evidence" value="ECO:0007669"/>
    <property type="project" value="TreeGrafter"/>
</dbReference>
<dbReference type="GO" id="GO:0003684">
    <property type="term" value="F:damaged DNA binding"/>
    <property type="evidence" value="ECO:0007669"/>
    <property type="project" value="InterPro"/>
</dbReference>
<dbReference type="GO" id="GO:0003887">
    <property type="term" value="F:DNA-directed DNA polymerase activity"/>
    <property type="evidence" value="ECO:0007669"/>
    <property type="project" value="UniProtKB-UniRule"/>
</dbReference>
<dbReference type="GO" id="GO:0000287">
    <property type="term" value="F:magnesium ion binding"/>
    <property type="evidence" value="ECO:0007669"/>
    <property type="project" value="UniProtKB-UniRule"/>
</dbReference>
<dbReference type="GO" id="GO:0006261">
    <property type="term" value="P:DNA-templated DNA replication"/>
    <property type="evidence" value="ECO:0007669"/>
    <property type="project" value="UniProtKB-UniRule"/>
</dbReference>
<dbReference type="GO" id="GO:0042276">
    <property type="term" value="P:error-prone translesion synthesis"/>
    <property type="evidence" value="ECO:0007669"/>
    <property type="project" value="TreeGrafter"/>
</dbReference>
<dbReference type="GO" id="GO:0009432">
    <property type="term" value="P:SOS response"/>
    <property type="evidence" value="ECO:0007669"/>
    <property type="project" value="TreeGrafter"/>
</dbReference>
<dbReference type="CDD" id="cd03586">
    <property type="entry name" value="PolY_Pol_IV_kappa"/>
    <property type="match status" value="1"/>
</dbReference>
<dbReference type="FunFam" id="3.40.1170.60:FF:000001">
    <property type="entry name" value="DNA polymerase IV"/>
    <property type="match status" value="1"/>
</dbReference>
<dbReference type="Gene3D" id="3.30.70.270">
    <property type="match status" value="1"/>
</dbReference>
<dbReference type="Gene3D" id="3.40.1170.60">
    <property type="match status" value="1"/>
</dbReference>
<dbReference type="Gene3D" id="1.10.150.20">
    <property type="entry name" value="5' to 3' exonuclease, C-terminal subdomain"/>
    <property type="match status" value="1"/>
</dbReference>
<dbReference type="Gene3D" id="3.30.1490.100">
    <property type="entry name" value="DNA polymerase, Y-family, little finger domain"/>
    <property type="match status" value="1"/>
</dbReference>
<dbReference type="HAMAP" id="MF_01113">
    <property type="entry name" value="DNApol_IV"/>
    <property type="match status" value="1"/>
</dbReference>
<dbReference type="InterPro" id="IPR043502">
    <property type="entry name" value="DNA/RNA_pol_sf"/>
</dbReference>
<dbReference type="InterPro" id="IPR036775">
    <property type="entry name" value="DNA_pol_Y-fam_lit_finger_sf"/>
</dbReference>
<dbReference type="InterPro" id="IPR017961">
    <property type="entry name" value="DNA_pol_Y-fam_little_finger"/>
</dbReference>
<dbReference type="InterPro" id="IPR050116">
    <property type="entry name" value="DNA_polymerase-Y"/>
</dbReference>
<dbReference type="InterPro" id="IPR022880">
    <property type="entry name" value="DNApol_IV"/>
</dbReference>
<dbReference type="InterPro" id="IPR053848">
    <property type="entry name" value="IMS_HHH_1"/>
</dbReference>
<dbReference type="InterPro" id="IPR043128">
    <property type="entry name" value="Rev_trsase/Diguanyl_cyclase"/>
</dbReference>
<dbReference type="InterPro" id="IPR001126">
    <property type="entry name" value="UmuC"/>
</dbReference>
<dbReference type="NCBIfam" id="NF002677">
    <property type="entry name" value="PRK02406.1"/>
    <property type="match status" value="1"/>
</dbReference>
<dbReference type="NCBIfam" id="NF010731">
    <property type="entry name" value="PRK14133.1"/>
    <property type="match status" value="1"/>
</dbReference>
<dbReference type="PANTHER" id="PTHR11076:SF33">
    <property type="entry name" value="DNA POLYMERASE KAPPA"/>
    <property type="match status" value="1"/>
</dbReference>
<dbReference type="PANTHER" id="PTHR11076">
    <property type="entry name" value="DNA REPAIR POLYMERASE UMUC / TRANSFERASE FAMILY MEMBER"/>
    <property type="match status" value="1"/>
</dbReference>
<dbReference type="Pfam" id="PF00817">
    <property type="entry name" value="IMS"/>
    <property type="match status" value="1"/>
</dbReference>
<dbReference type="Pfam" id="PF11799">
    <property type="entry name" value="IMS_C"/>
    <property type="match status" value="1"/>
</dbReference>
<dbReference type="Pfam" id="PF21999">
    <property type="entry name" value="IMS_HHH_1"/>
    <property type="match status" value="1"/>
</dbReference>
<dbReference type="SUPFAM" id="SSF56672">
    <property type="entry name" value="DNA/RNA polymerases"/>
    <property type="match status" value="1"/>
</dbReference>
<dbReference type="SUPFAM" id="SSF100879">
    <property type="entry name" value="Lesion bypass DNA polymerase (Y-family), little finger domain"/>
    <property type="match status" value="1"/>
</dbReference>
<dbReference type="PROSITE" id="PS50173">
    <property type="entry name" value="UMUC"/>
    <property type="match status" value="1"/>
</dbReference>
<organism>
    <name type="scientific">Carboxydothermus hydrogenoformans (strain ATCC BAA-161 / DSM 6008 / Z-2901)</name>
    <dbReference type="NCBI Taxonomy" id="246194"/>
    <lineage>
        <taxon>Bacteria</taxon>
        <taxon>Bacillati</taxon>
        <taxon>Bacillota</taxon>
        <taxon>Clostridia</taxon>
        <taxon>Thermoanaerobacterales</taxon>
        <taxon>Thermoanaerobacteraceae</taxon>
        <taxon>Carboxydothermus</taxon>
    </lineage>
</organism>
<feature type="chain" id="PRO_1000137125" description="DNA polymerase IV">
    <location>
        <begin position="1"/>
        <end position="391"/>
    </location>
</feature>
<feature type="domain" description="UmuC" evidence="1">
    <location>
        <begin position="6"/>
        <end position="187"/>
    </location>
</feature>
<feature type="active site" evidence="1">
    <location>
        <position position="106"/>
    </location>
</feature>
<feature type="binding site" evidence="1">
    <location>
        <position position="10"/>
    </location>
    <ligand>
        <name>Mg(2+)</name>
        <dbReference type="ChEBI" id="CHEBI:18420"/>
    </ligand>
</feature>
<feature type="binding site" evidence="1">
    <location>
        <position position="105"/>
    </location>
    <ligand>
        <name>Mg(2+)</name>
        <dbReference type="ChEBI" id="CHEBI:18420"/>
    </ligand>
</feature>
<feature type="site" description="Substrate discrimination" evidence="1">
    <location>
        <position position="15"/>
    </location>
</feature>
<reference key="1">
    <citation type="journal article" date="2005" name="PLoS Genet.">
        <title>Life in hot carbon monoxide: the complete genome sequence of Carboxydothermus hydrogenoformans Z-2901.</title>
        <authorList>
            <person name="Wu M."/>
            <person name="Ren Q."/>
            <person name="Durkin A.S."/>
            <person name="Daugherty S.C."/>
            <person name="Brinkac L.M."/>
            <person name="Dodson R.J."/>
            <person name="Madupu R."/>
            <person name="Sullivan S.A."/>
            <person name="Kolonay J.F."/>
            <person name="Nelson W.C."/>
            <person name="Tallon L.J."/>
            <person name="Jones K.M."/>
            <person name="Ulrich L.E."/>
            <person name="Gonzalez J.M."/>
            <person name="Zhulin I.B."/>
            <person name="Robb F.T."/>
            <person name="Eisen J.A."/>
        </authorList>
    </citation>
    <scope>NUCLEOTIDE SEQUENCE [LARGE SCALE GENOMIC DNA]</scope>
    <source>
        <strain>ATCC BAA-161 / DSM 6008 / Z-2901</strain>
    </source>
</reference>
<sequence length="391" mass="44201">MKKRVIIHVDMDAFFAAVEQRDNPELKGKPVIVGGVPGERGVVAAASYEARKFGVRSAMSLWEAARLCPHGIFIPGNHKKYQEVSEKIFRIFREYTPLVEPVSLDEAYLDVTGSQKLFGPGAEIGKKIKKRIFEETELTASVGVAPNKFLAKLASEVNKPDGFCEVREDNVLDFLAPLPVEMLWGVGEKMKERLNDMGIKTVQDFWELPEFFLRKKFGVLGQNLYYLSRGIDFREVIPERVPKSLGKEITLQKDSSDVDYLLGKLLGLTMAVGRGLRREGFYAGGISVKIRLSSFITYTRHSRFFEPTWMDDVLYREAKRLFLENYHGELPVRLVGVTATPLVPVGGGRQISLFGEDLRRENLYPIIDRLNHKYGNKTVTRAKILKISGRG</sequence>